<proteinExistence type="inferred from homology"/>
<gene>
    <name evidence="1" type="primary">alaS</name>
    <name type="ordered locus">Xaut_4081</name>
</gene>
<comment type="function">
    <text evidence="1">Catalyzes the attachment of alanine to tRNA(Ala) in a two-step reaction: alanine is first activated by ATP to form Ala-AMP and then transferred to the acceptor end of tRNA(Ala). Also edits incorrectly charged Ser-tRNA(Ala) and Gly-tRNA(Ala) via its editing domain.</text>
</comment>
<comment type="catalytic activity">
    <reaction evidence="1">
        <text>tRNA(Ala) + L-alanine + ATP = L-alanyl-tRNA(Ala) + AMP + diphosphate</text>
        <dbReference type="Rhea" id="RHEA:12540"/>
        <dbReference type="Rhea" id="RHEA-COMP:9657"/>
        <dbReference type="Rhea" id="RHEA-COMP:9923"/>
        <dbReference type="ChEBI" id="CHEBI:30616"/>
        <dbReference type="ChEBI" id="CHEBI:33019"/>
        <dbReference type="ChEBI" id="CHEBI:57972"/>
        <dbReference type="ChEBI" id="CHEBI:78442"/>
        <dbReference type="ChEBI" id="CHEBI:78497"/>
        <dbReference type="ChEBI" id="CHEBI:456215"/>
        <dbReference type="EC" id="6.1.1.7"/>
    </reaction>
</comment>
<comment type="cofactor">
    <cofactor evidence="1">
        <name>Zn(2+)</name>
        <dbReference type="ChEBI" id="CHEBI:29105"/>
    </cofactor>
    <text evidence="1">Binds 1 zinc ion per subunit.</text>
</comment>
<comment type="subcellular location">
    <subcellularLocation>
        <location evidence="1">Cytoplasm</location>
    </subcellularLocation>
</comment>
<comment type="domain">
    <text evidence="1">Consists of three domains; the N-terminal catalytic domain, the editing domain and the C-terminal C-Ala domain. The editing domain removes incorrectly charged amino acids, while the C-Ala domain, along with tRNA(Ala), serves as a bridge to cooperatively bring together the editing and aminoacylation centers thus stimulating deacylation of misacylated tRNAs.</text>
</comment>
<comment type="similarity">
    <text evidence="1">Belongs to the class-II aminoacyl-tRNA synthetase family.</text>
</comment>
<evidence type="ECO:0000255" key="1">
    <source>
        <dbReference type="HAMAP-Rule" id="MF_00036"/>
    </source>
</evidence>
<keyword id="KW-0030">Aminoacyl-tRNA synthetase</keyword>
<keyword id="KW-0067">ATP-binding</keyword>
<keyword id="KW-0963">Cytoplasm</keyword>
<keyword id="KW-0436">Ligase</keyword>
<keyword id="KW-0479">Metal-binding</keyword>
<keyword id="KW-0547">Nucleotide-binding</keyword>
<keyword id="KW-0648">Protein biosynthesis</keyword>
<keyword id="KW-1185">Reference proteome</keyword>
<keyword id="KW-0694">RNA-binding</keyword>
<keyword id="KW-0820">tRNA-binding</keyword>
<keyword id="KW-0862">Zinc</keyword>
<organism>
    <name type="scientific">Xanthobacter autotrophicus (strain ATCC BAA-1158 / Py2)</name>
    <dbReference type="NCBI Taxonomy" id="78245"/>
    <lineage>
        <taxon>Bacteria</taxon>
        <taxon>Pseudomonadati</taxon>
        <taxon>Pseudomonadota</taxon>
        <taxon>Alphaproteobacteria</taxon>
        <taxon>Hyphomicrobiales</taxon>
        <taxon>Xanthobacteraceae</taxon>
        <taxon>Xanthobacter</taxon>
    </lineage>
</organism>
<reference key="1">
    <citation type="submission" date="2007-07" db="EMBL/GenBank/DDBJ databases">
        <title>Complete sequence of chromosome of Xanthobacter autotrophicus Py2.</title>
        <authorList>
            <consortium name="US DOE Joint Genome Institute"/>
            <person name="Copeland A."/>
            <person name="Lucas S."/>
            <person name="Lapidus A."/>
            <person name="Barry K."/>
            <person name="Glavina del Rio T."/>
            <person name="Hammon N."/>
            <person name="Israni S."/>
            <person name="Dalin E."/>
            <person name="Tice H."/>
            <person name="Pitluck S."/>
            <person name="Sims D."/>
            <person name="Brettin T."/>
            <person name="Bruce D."/>
            <person name="Detter J.C."/>
            <person name="Han C."/>
            <person name="Tapia R."/>
            <person name="Brainard J."/>
            <person name="Schmutz J."/>
            <person name="Larimer F."/>
            <person name="Land M."/>
            <person name="Hauser L."/>
            <person name="Kyrpides N."/>
            <person name="Kim E."/>
            <person name="Ensigns S.A."/>
            <person name="Richardson P."/>
        </authorList>
    </citation>
    <scope>NUCLEOTIDE SEQUENCE [LARGE SCALE GENOMIC DNA]</scope>
    <source>
        <strain>ATCC BAA-1158 / Py2</strain>
    </source>
</reference>
<sequence>MSGVNEIRSSFIDYFVKEGHEAVASSPLVPQNDPTLMFTNAGMVQFKNVFTGVEKRPYSRAATSQKCVRAGGKHNDLDNVGYTARHHTFFEMLGNFSFGDYFKDRAIELAWNLVTRTFELPRDRLVVTVFSEDEEAYGLWKKIAGLSDDKIIRIPTSDNFWSMGDTGPCGPCSEIFFDHGPNVPGGPPGSPDQDGDRFIEIWNLVFMQFEQLPGGERLALPRPSIDTGMGLERVSAVLQGVHDNYDTDLMRALIAEVAELTSVNPDGPQKASHRVIADHLRASVFLTADGVLPSNEGRGYVLRRIMRRAMRHAQLLGAKDPLMHRLVPVLVREMGRAYPEIVRAESLAEETLLLEETRFRRTLERGLSILEEESTGLTSGGQFPGEVAFKLYDTYGFPLDLTQDALRARGISVDTTAFDAAMARQKAEARASWAGSGEAATDTLWFSVRDEVGATEFLGYETEKAEGVVAALVRDGAVVDSLAAGEKGLVILNQTPFYAESGGQVGDIGRVSGEGGVAAQVVATQKKLGDLFVHEVKVETGTLKRGTALVLEVDHARRAAVRANHSATHLLHEALRRVLGDHVAQKGSLVAPDRLRFDFSHPKPLSGGELAEVETIANRFVLRNEPVETRIMAVDDAITSGARALFGEKYGDEVRVVSMGTDDGNGAPYSVELCGGTHVKRTGDIGLISVLSESAVASGVRRIEALTADAARRHLNAASAALAGTAAVLKAPVAEVEARVATLVEERRRLERELAEARKKLAMGGGGEASGDAVRTVGDIKLLARRVEGIEIKDLKGLVDEGKKQIGSGVVAIVGVTSDGKAGIVVGVTADLIARFDAVALVRVGSEALGGKGGGGRPDMAQAGGPDGAKAEAALDAIAAAMAG</sequence>
<dbReference type="EC" id="6.1.1.7" evidence="1"/>
<dbReference type="EMBL" id="CP000781">
    <property type="protein sequence ID" value="ABS69303.1"/>
    <property type="molecule type" value="Genomic_DNA"/>
</dbReference>
<dbReference type="SMR" id="A7IMR0"/>
<dbReference type="STRING" id="78245.Xaut_4081"/>
<dbReference type="KEGG" id="xau:Xaut_4081"/>
<dbReference type="eggNOG" id="COG0013">
    <property type="taxonomic scope" value="Bacteria"/>
</dbReference>
<dbReference type="HOGENOM" id="CLU_004485_1_1_5"/>
<dbReference type="OrthoDB" id="9803884at2"/>
<dbReference type="PhylomeDB" id="A7IMR0"/>
<dbReference type="Proteomes" id="UP000002417">
    <property type="component" value="Chromosome"/>
</dbReference>
<dbReference type="GO" id="GO:0005829">
    <property type="term" value="C:cytosol"/>
    <property type="evidence" value="ECO:0007669"/>
    <property type="project" value="TreeGrafter"/>
</dbReference>
<dbReference type="GO" id="GO:0004813">
    <property type="term" value="F:alanine-tRNA ligase activity"/>
    <property type="evidence" value="ECO:0007669"/>
    <property type="project" value="UniProtKB-UniRule"/>
</dbReference>
<dbReference type="GO" id="GO:0002161">
    <property type="term" value="F:aminoacyl-tRNA deacylase activity"/>
    <property type="evidence" value="ECO:0007669"/>
    <property type="project" value="TreeGrafter"/>
</dbReference>
<dbReference type="GO" id="GO:0005524">
    <property type="term" value="F:ATP binding"/>
    <property type="evidence" value="ECO:0007669"/>
    <property type="project" value="UniProtKB-UniRule"/>
</dbReference>
<dbReference type="GO" id="GO:0000049">
    <property type="term" value="F:tRNA binding"/>
    <property type="evidence" value="ECO:0007669"/>
    <property type="project" value="UniProtKB-KW"/>
</dbReference>
<dbReference type="GO" id="GO:0008270">
    <property type="term" value="F:zinc ion binding"/>
    <property type="evidence" value="ECO:0007669"/>
    <property type="project" value="UniProtKB-UniRule"/>
</dbReference>
<dbReference type="GO" id="GO:0006419">
    <property type="term" value="P:alanyl-tRNA aminoacylation"/>
    <property type="evidence" value="ECO:0007669"/>
    <property type="project" value="UniProtKB-UniRule"/>
</dbReference>
<dbReference type="GO" id="GO:0045892">
    <property type="term" value="P:negative regulation of DNA-templated transcription"/>
    <property type="evidence" value="ECO:0007669"/>
    <property type="project" value="TreeGrafter"/>
</dbReference>
<dbReference type="CDD" id="cd00673">
    <property type="entry name" value="AlaRS_core"/>
    <property type="match status" value="1"/>
</dbReference>
<dbReference type="FunFam" id="2.40.30.130:FF:000001">
    <property type="entry name" value="Alanine--tRNA ligase"/>
    <property type="match status" value="1"/>
</dbReference>
<dbReference type="FunFam" id="3.10.310.40:FF:000001">
    <property type="entry name" value="Alanine--tRNA ligase"/>
    <property type="match status" value="1"/>
</dbReference>
<dbReference type="FunFam" id="3.30.54.20:FF:000001">
    <property type="entry name" value="Alanine--tRNA ligase"/>
    <property type="match status" value="1"/>
</dbReference>
<dbReference type="FunFam" id="3.30.930.10:FF:000004">
    <property type="entry name" value="Alanine--tRNA ligase"/>
    <property type="match status" value="1"/>
</dbReference>
<dbReference type="FunFam" id="3.30.980.10:FF:000004">
    <property type="entry name" value="Alanine--tRNA ligase, cytoplasmic"/>
    <property type="match status" value="1"/>
</dbReference>
<dbReference type="Gene3D" id="2.40.30.130">
    <property type="match status" value="1"/>
</dbReference>
<dbReference type="Gene3D" id="3.10.310.40">
    <property type="match status" value="1"/>
</dbReference>
<dbReference type="Gene3D" id="3.30.54.20">
    <property type="match status" value="1"/>
</dbReference>
<dbReference type="Gene3D" id="6.10.250.550">
    <property type="match status" value="1"/>
</dbReference>
<dbReference type="Gene3D" id="3.30.930.10">
    <property type="entry name" value="Bira Bifunctional Protein, Domain 2"/>
    <property type="match status" value="1"/>
</dbReference>
<dbReference type="Gene3D" id="3.30.980.10">
    <property type="entry name" value="Threonyl-trna Synthetase, Chain A, domain 2"/>
    <property type="match status" value="1"/>
</dbReference>
<dbReference type="HAMAP" id="MF_00036_B">
    <property type="entry name" value="Ala_tRNA_synth_B"/>
    <property type="match status" value="1"/>
</dbReference>
<dbReference type="InterPro" id="IPR045864">
    <property type="entry name" value="aa-tRNA-synth_II/BPL/LPL"/>
</dbReference>
<dbReference type="InterPro" id="IPR002318">
    <property type="entry name" value="Ala-tRNA-lgiase_IIc"/>
</dbReference>
<dbReference type="InterPro" id="IPR018162">
    <property type="entry name" value="Ala-tRNA-ligase_IIc_anticod-bd"/>
</dbReference>
<dbReference type="InterPro" id="IPR018165">
    <property type="entry name" value="Ala-tRNA-synth_IIc_core"/>
</dbReference>
<dbReference type="InterPro" id="IPR018164">
    <property type="entry name" value="Ala-tRNA-synth_IIc_N"/>
</dbReference>
<dbReference type="InterPro" id="IPR050058">
    <property type="entry name" value="Ala-tRNA_ligase"/>
</dbReference>
<dbReference type="InterPro" id="IPR023033">
    <property type="entry name" value="Ala_tRNA_ligase_euk/bac"/>
</dbReference>
<dbReference type="InterPro" id="IPR003156">
    <property type="entry name" value="DHHA1_dom"/>
</dbReference>
<dbReference type="InterPro" id="IPR018163">
    <property type="entry name" value="Thr/Ala-tRNA-synth_IIc_edit"/>
</dbReference>
<dbReference type="InterPro" id="IPR009000">
    <property type="entry name" value="Transl_B-barrel_sf"/>
</dbReference>
<dbReference type="InterPro" id="IPR012947">
    <property type="entry name" value="tRNA_SAD"/>
</dbReference>
<dbReference type="NCBIfam" id="TIGR00344">
    <property type="entry name" value="alaS"/>
    <property type="match status" value="1"/>
</dbReference>
<dbReference type="PANTHER" id="PTHR11777:SF9">
    <property type="entry name" value="ALANINE--TRNA LIGASE, CYTOPLASMIC"/>
    <property type="match status" value="1"/>
</dbReference>
<dbReference type="PANTHER" id="PTHR11777">
    <property type="entry name" value="ALANYL-TRNA SYNTHETASE"/>
    <property type="match status" value="1"/>
</dbReference>
<dbReference type="Pfam" id="PF02272">
    <property type="entry name" value="DHHA1"/>
    <property type="match status" value="1"/>
</dbReference>
<dbReference type="Pfam" id="PF01411">
    <property type="entry name" value="tRNA-synt_2c"/>
    <property type="match status" value="1"/>
</dbReference>
<dbReference type="Pfam" id="PF07973">
    <property type="entry name" value="tRNA_SAD"/>
    <property type="match status" value="1"/>
</dbReference>
<dbReference type="PRINTS" id="PR00980">
    <property type="entry name" value="TRNASYNTHALA"/>
</dbReference>
<dbReference type="SMART" id="SM00863">
    <property type="entry name" value="tRNA_SAD"/>
    <property type="match status" value="1"/>
</dbReference>
<dbReference type="SUPFAM" id="SSF55681">
    <property type="entry name" value="Class II aaRS and biotin synthetases"/>
    <property type="match status" value="1"/>
</dbReference>
<dbReference type="SUPFAM" id="SSF101353">
    <property type="entry name" value="Putative anticodon-binding domain of alanyl-tRNA synthetase (AlaRS)"/>
    <property type="match status" value="1"/>
</dbReference>
<dbReference type="SUPFAM" id="SSF55186">
    <property type="entry name" value="ThrRS/AlaRS common domain"/>
    <property type="match status" value="1"/>
</dbReference>
<dbReference type="SUPFAM" id="SSF50447">
    <property type="entry name" value="Translation proteins"/>
    <property type="match status" value="1"/>
</dbReference>
<dbReference type="PROSITE" id="PS50860">
    <property type="entry name" value="AA_TRNA_LIGASE_II_ALA"/>
    <property type="match status" value="1"/>
</dbReference>
<feature type="chain" id="PRO_0000347862" description="Alanine--tRNA ligase">
    <location>
        <begin position="1"/>
        <end position="884"/>
    </location>
</feature>
<feature type="binding site" evidence="1">
    <location>
        <position position="565"/>
    </location>
    <ligand>
        <name>Zn(2+)</name>
        <dbReference type="ChEBI" id="CHEBI:29105"/>
    </ligand>
</feature>
<feature type="binding site" evidence="1">
    <location>
        <position position="569"/>
    </location>
    <ligand>
        <name>Zn(2+)</name>
        <dbReference type="ChEBI" id="CHEBI:29105"/>
    </ligand>
</feature>
<feature type="binding site" evidence="1">
    <location>
        <position position="674"/>
    </location>
    <ligand>
        <name>Zn(2+)</name>
        <dbReference type="ChEBI" id="CHEBI:29105"/>
    </ligand>
</feature>
<feature type="binding site" evidence="1">
    <location>
        <position position="678"/>
    </location>
    <ligand>
        <name>Zn(2+)</name>
        <dbReference type="ChEBI" id="CHEBI:29105"/>
    </ligand>
</feature>
<accession>A7IMR0</accession>
<protein>
    <recommendedName>
        <fullName evidence="1">Alanine--tRNA ligase</fullName>
        <ecNumber evidence="1">6.1.1.7</ecNumber>
    </recommendedName>
    <alternativeName>
        <fullName evidence="1">Alanyl-tRNA synthetase</fullName>
        <shortName evidence="1">AlaRS</shortName>
    </alternativeName>
</protein>
<name>SYA_XANP2</name>